<proteinExistence type="inferred from homology"/>
<feature type="chain" id="PRO_0000258407" description="Phosphoribosylformylglycinamidine cyclo-ligase">
    <location>
        <begin position="1"/>
        <end position="345"/>
    </location>
</feature>
<sequence>MTDKTSLSYKDAGVDIDAGNALVDRIKGVVKQTKRPEVMGGLGGFGALCALPQKYREPILVSGTDGVGTKLRLAMDLKRHDTIGIDLVAMCVNDLVVQGAEPLFFLDYYATGKLDVDTAAAVITGIAEGCKQSGCALVGGETAEMPGMYHGEDYDVAGFCVGVVEKADIIDGSKVQAGDTLLALAASGPHSNGYSLVRKILSFSQTDPEQTQVEGKSLADHLLAPTCIYVKALLSLIAQTEVHAIAHLTGGGFWENIPRVLPAGTQAVIDKNSWQWPAVFRWLQQAGNVSRHEMYRTFNCGVGMVIAVPADSTAKALAILADLGETAWVLGQIHPADGEHQVIIR</sequence>
<dbReference type="EC" id="6.3.3.1" evidence="1"/>
<dbReference type="EMBL" id="AP008232">
    <property type="protein sequence ID" value="BAE75007.1"/>
    <property type="molecule type" value="Genomic_DNA"/>
</dbReference>
<dbReference type="RefSeq" id="WP_011411556.1">
    <property type="nucleotide sequence ID" value="NC_007712.1"/>
</dbReference>
<dbReference type="SMR" id="Q2NS68"/>
<dbReference type="STRING" id="343509.SG1732"/>
<dbReference type="KEGG" id="sgl:SG1732"/>
<dbReference type="eggNOG" id="COG0150">
    <property type="taxonomic scope" value="Bacteria"/>
</dbReference>
<dbReference type="HOGENOM" id="CLU_047116_0_0_6"/>
<dbReference type="OrthoDB" id="9777881at2"/>
<dbReference type="BioCyc" id="SGLO343509:SGP1_RS15695-MONOMER"/>
<dbReference type="UniPathway" id="UPA00074">
    <property type="reaction ID" value="UER00129"/>
</dbReference>
<dbReference type="Proteomes" id="UP000001932">
    <property type="component" value="Chromosome"/>
</dbReference>
<dbReference type="GO" id="GO:0005829">
    <property type="term" value="C:cytosol"/>
    <property type="evidence" value="ECO:0007669"/>
    <property type="project" value="TreeGrafter"/>
</dbReference>
<dbReference type="GO" id="GO:0005524">
    <property type="term" value="F:ATP binding"/>
    <property type="evidence" value="ECO:0007669"/>
    <property type="project" value="UniProtKB-KW"/>
</dbReference>
<dbReference type="GO" id="GO:0004637">
    <property type="term" value="F:phosphoribosylamine-glycine ligase activity"/>
    <property type="evidence" value="ECO:0007669"/>
    <property type="project" value="TreeGrafter"/>
</dbReference>
<dbReference type="GO" id="GO:0004641">
    <property type="term" value="F:phosphoribosylformylglycinamidine cyclo-ligase activity"/>
    <property type="evidence" value="ECO:0007669"/>
    <property type="project" value="UniProtKB-UniRule"/>
</dbReference>
<dbReference type="GO" id="GO:0006189">
    <property type="term" value="P:'de novo' IMP biosynthetic process"/>
    <property type="evidence" value="ECO:0007669"/>
    <property type="project" value="UniProtKB-UniRule"/>
</dbReference>
<dbReference type="GO" id="GO:0046084">
    <property type="term" value="P:adenine biosynthetic process"/>
    <property type="evidence" value="ECO:0007669"/>
    <property type="project" value="TreeGrafter"/>
</dbReference>
<dbReference type="CDD" id="cd02196">
    <property type="entry name" value="PurM"/>
    <property type="match status" value="1"/>
</dbReference>
<dbReference type="FunFam" id="3.30.1330.10:FF:000001">
    <property type="entry name" value="Phosphoribosylformylglycinamidine cyclo-ligase"/>
    <property type="match status" value="1"/>
</dbReference>
<dbReference type="FunFam" id="3.90.650.10:FF:000001">
    <property type="entry name" value="Phosphoribosylformylglycinamidine cyclo-ligase"/>
    <property type="match status" value="1"/>
</dbReference>
<dbReference type="Gene3D" id="3.90.650.10">
    <property type="entry name" value="PurM-like C-terminal domain"/>
    <property type="match status" value="1"/>
</dbReference>
<dbReference type="Gene3D" id="3.30.1330.10">
    <property type="entry name" value="PurM-like, N-terminal domain"/>
    <property type="match status" value="1"/>
</dbReference>
<dbReference type="HAMAP" id="MF_00741">
    <property type="entry name" value="AIRS"/>
    <property type="match status" value="1"/>
</dbReference>
<dbReference type="InterPro" id="IPR010918">
    <property type="entry name" value="PurM-like_C_dom"/>
</dbReference>
<dbReference type="InterPro" id="IPR036676">
    <property type="entry name" value="PurM-like_C_sf"/>
</dbReference>
<dbReference type="InterPro" id="IPR016188">
    <property type="entry name" value="PurM-like_N"/>
</dbReference>
<dbReference type="InterPro" id="IPR036921">
    <property type="entry name" value="PurM-like_N_sf"/>
</dbReference>
<dbReference type="InterPro" id="IPR004733">
    <property type="entry name" value="PurM_cligase"/>
</dbReference>
<dbReference type="NCBIfam" id="TIGR00878">
    <property type="entry name" value="purM"/>
    <property type="match status" value="1"/>
</dbReference>
<dbReference type="PANTHER" id="PTHR10520:SF12">
    <property type="entry name" value="TRIFUNCTIONAL PURINE BIOSYNTHETIC PROTEIN ADENOSINE-3"/>
    <property type="match status" value="1"/>
</dbReference>
<dbReference type="PANTHER" id="PTHR10520">
    <property type="entry name" value="TRIFUNCTIONAL PURINE BIOSYNTHETIC PROTEIN ADENOSINE-3-RELATED"/>
    <property type="match status" value="1"/>
</dbReference>
<dbReference type="Pfam" id="PF00586">
    <property type="entry name" value="AIRS"/>
    <property type="match status" value="1"/>
</dbReference>
<dbReference type="Pfam" id="PF02769">
    <property type="entry name" value="AIRS_C"/>
    <property type="match status" value="1"/>
</dbReference>
<dbReference type="SUPFAM" id="SSF56042">
    <property type="entry name" value="PurM C-terminal domain-like"/>
    <property type="match status" value="1"/>
</dbReference>
<dbReference type="SUPFAM" id="SSF55326">
    <property type="entry name" value="PurM N-terminal domain-like"/>
    <property type="match status" value="1"/>
</dbReference>
<evidence type="ECO:0000255" key="1">
    <source>
        <dbReference type="HAMAP-Rule" id="MF_00741"/>
    </source>
</evidence>
<reference key="1">
    <citation type="journal article" date="2006" name="Genome Res.">
        <title>Massive genome erosion and functional adaptations provide insights into the symbiotic lifestyle of Sodalis glossinidius in the tsetse host.</title>
        <authorList>
            <person name="Toh H."/>
            <person name="Weiss B.L."/>
            <person name="Perkin S.A.H."/>
            <person name="Yamashita A."/>
            <person name="Oshima K."/>
            <person name="Hattori M."/>
            <person name="Aksoy S."/>
        </authorList>
    </citation>
    <scope>NUCLEOTIDE SEQUENCE [LARGE SCALE GENOMIC DNA]</scope>
    <source>
        <strain>morsitans</strain>
    </source>
</reference>
<comment type="catalytic activity">
    <reaction evidence="1">
        <text>2-formamido-N(1)-(5-O-phospho-beta-D-ribosyl)acetamidine + ATP = 5-amino-1-(5-phospho-beta-D-ribosyl)imidazole + ADP + phosphate + H(+)</text>
        <dbReference type="Rhea" id="RHEA:23032"/>
        <dbReference type="ChEBI" id="CHEBI:15378"/>
        <dbReference type="ChEBI" id="CHEBI:30616"/>
        <dbReference type="ChEBI" id="CHEBI:43474"/>
        <dbReference type="ChEBI" id="CHEBI:137981"/>
        <dbReference type="ChEBI" id="CHEBI:147287"/>
        <dbReference type="ChEBI" id="CHEBI:456216"/>
        <dbReference type="EC" id="6.3.3.1"/>
    </reaction>
</comment>
<comment type="pathway">
    <text evidence="1">Purine metabolism; IMP biosynthesis via de novo pathway; 5-amino-1-(5-phospho-D-ribosyl)imidazole from N(2)-formyl-N(1)-(5-phospho-D-ribosyl)glycinamide: step 2/2.</text>
</comment>
<comment type="subcellular location">
    <subcellularLocation>
        <location evidence="1">Cytoplasm</location>
    </subcellularLocation>
</comment>
<comment type="similarity">
    <text evidence="1">Belongs to the AIR synthase family.</text>
</comment>
<protein>
    <recommendedName>
        <fullName evidence="1">Phosphoribosylformylglycinamidine cyclo-ligase</fullName>
        <ecNumber evidence="1">6.3.3.1</ecNumber>
    </recommendedName>
    <alternativeName>
        <fullName evidence="1">AIR synthase</fullName>
    </alternativeName>
    <alternativeName>
        <fullName evidence="1">AIRS</fullName>
    </alternativeName>
    <alternativeName>
        <fullName evidence="1">Phosphoribosyl-aminoimidazole synthetase</fullName>
    </alternativeName>
</protein>
<organism>
    <name type="scientific">Sodalis glossinidius (strain morsitans)</name>
    <dbReference type="NCBI Taxonomy" id="343509"/>
    <lineage>
        <taxon>Bacteria</taxon>
        <taxon>Pseudomonadati</taxon>
        <taxon>Pseudomonadota</taxon>
        <taxon>Gammaproteobacteria</taxon>
        <taxon>Enterobacterales</taxon>
        <taxon>Bruguierivoracaceae</taxon>
        <taxon>Sodalis</taxon>
    </lineage>
</organism>
<gene>
    <name evidence="1" type="primary">purM</name>
    <name type="ordered locus">SG1732</name>
</gene>
<accession>Q2NS68</accession>
<name>PUR5_SODGM</name>
<keyword id="KW-0067">ATP-binding</keyword>
<keyword id="KW-0963">Cytoplasm</keyword>
<keyword id="KW-0436">Ligase</keyword>
<keyword id="KW-0547">Nucleotide-binding</keyword>
<keyword id="KW-0658">Purine biosynthesis</keyword>